<feature type="chain" id="PRO_1000127070" description="Small ribosomal subunit protein uS10">
    <location>
        <begin position="1"/>
        <end position="103"/>
    </location>
</feature>
<evidence type="ECO:0000255" key="1">
    <source>
        <dbReference type="HAMAP-Rule" id="MF_00508"/>
    </source>
</evidence>
<evidence type="ECO:0000305" key="2"/>
<comment type="function">
    <text evidence="1">Involved in the binding of tRNA to the ribosomes.</text>
</comment>
<comment type="subunit">
    <text evidence="1">Part of the 30S ribosomal subunit.</text>
</comment>
<comment type="similarity">
    <text evidence="1">Belongs to the universal ribosomal protein uS10 family.</text>
</comment>
<keyword id="KW-0687">Ribonucleoprotein</keyword>
<keyword id="KW-0689">Ribosomal protein</keyword>
<name>RS10_ACTP7</name>
<accession>B3GZ10</accession>
<dbReference type="EMBL" id="CP001091">
    <property type="protein sequence ID" value="ACE62496.1"/>
    <property type="molecule type" value="Genomic_DNA"/>
</dbReference>
<dbReference type="RefSeq" id="WP_001181005.1">
    <property type="nucleotide sequence ID" value="NC_010939.1"/>
</dbReference>
<dbReference type="SMR" id="B3GZ10"/>
<dbReference type="GeneID" id="98390443"/>
<dbReference type="KEGG" id="apa:APP7_1844"/>
<dbReference type="HOGENOM" id="CLU_122625_1_3_6"/>
<dbReference type="Proteomes" id="UP000001226">
    <property type="component" value="Chromosome"/>
</dbReference>
<dbReference type="GO" id="GO:1990904">
    <property type="term" value="C:ribonucleoprotein complex"/>
    <property type="evidence" value="ECO:0007669"/>
    <property type="project" value="UniProtKB-KW"/>
</dbReference>
<dbReference type="GO" id="GO:0005840">
    <property type="term" value="C:ribosome"/>
    <property type="evidence" value="ECO:0007669"/>
    <property type="project" value="UniProtKB-KW"/>
</dbReference>
<dbReference type="GO" id="GO:0003735">
    <property type="term" value="F:structural constituent of ribosome"/>
    <property type="evidence" value="ECO:0007669"/>
    <property type="project" value="InterPro"/>
</dbReference>
<dbReference type="GO" id="GO:0000049">
    <property type="term" value="F:tRNA binding"/>
    <property type="evidence" value="ECO:0007669"/>
    <property type="project" value="UniProtKB-UniRule"/>
</dbReference>
<dbReference type="GO" id="GO:0006412">
    <property type="term" value="P:translation"/>
    <property type="evidence" value="ECO:0007669"/>
    <property type="project" value="UniProtKB-UniRule"/>
</dbReference>
<dbReference type="FunFam" id="3.30.70.600:FF:000001">
    <property type="entry name" value="30S ribosomal protein S10"/>
    <property type="match status" value="1"/>
</dbReference>
<dbReference type="Gene3D" id="3.30.70.600">
    <property type="entry name" value="Ribosomal protein S10 domain"/>
    <property type="match status" value="1"/>
</dbReference>
<dbReference type="HAMAP" id="MF_00508">
    <property type="entry name" value="Ribosomal_uS10"/>
    <property type="match status" value="1"/>
</dbReference>
<dbReference type="InterPro" id="IPR001848">
    <property type="entry name" value="Ribosomal_uS10"/>
</dbReference>
<dbReference type="InterPro" id="IPR018268">
    <property type="entry name" value="Ribosomal_uS10_CS"/>
</dbReference>
<dbReference type="InterPro" id="IPR027486">
    <property type="entry name" value="Ribosomal_uS10_dom"/>
</dbReference>
<dbReference type="InterPro" id="IPR036838">
    <property type="entry name" value="Ribosomal_uS10_dom_sf"/>
</dbReference>
<dbReference type="NCBIfam" id="NF001861">
    <property type="entry name" value="PRK00596.1"/>
    <property type="match status" value="1"/>
</dbReference>
<dbReference type="NCBIfam" id="TIGR01049">
    <property type="entry name" value="rpsJ_bact"/>
    <property type="match status" value="1"/>
</dbReference>
<dbReference type="PANTHER" id="PTHR11700">
    <property type="entry name" value="30S RIBOSOMAL PROTEIN S10 FAMILY MEMBER"/>
    <property type="match status" value="1"/>
</dbReference>
<dbReference type="Pfam" id="PF00338">
    <property type="entry name" value="Ribosomal_S10"/>
    <property type="match status" value="1"/>
</dbReference>
<dbReference type="PRINTS" id="PR00971">
    <property type="entry name" value="RIBOSOMALS10"/>
</dbReference>
<dbReference type="SMART" id="SM01403">
    <property type="entry name" value="Ribosomal_S10"/>
    <property type="match status" value="1"/>
</dbReference>
<dbReference type="SUPFAM" id="SSF54999">
    <property type="entry name" value="Ribosomal protein S10"/>
    <property type="match status" value="1"/>
</dbReference>
<dbReference type="PROSITE" id="PS00361">
    <property type="entry name" value="RIBOSOMAL_S10"/>
    <property type="match status" value="1"/>
</dbReference>
<organism>
    <name type="scientific">Actinobacillus pleuropneumoniae serotype 7 (strain AP76)</name>
    <dbReference type="NCBI Taxonomy" id="537457"/>
    <lineage>
        <taxon>Bacteria</taxon>
        <taxon>Pseudomonadati</taxon>
        <taxon>Pseudomonadota</taxon>
        <taxon>Gammaproteobacteria</taxon>
        <taxon>Pasteurellales</taxon>
        <taxon>Pasteurellaceae</taxon>
        <taxon>Actinobacillus</taxon>
    </lineage>
</organism>
<protein>
    <recommendedName>
        <fullName evidence="1">Small ribosomal subunit protein uS10</fullName>
    </recommendedName>
    <alternativeName>
        <fullName evidence="2">30S ribosomal protein S10</fullName>
    </alternativeName>
</protein>
<gene>
    <name evidence="1" type="primary">rpsJ</name>
    <name type="ordered locus">APP7_1844</name>
</gene>
<proteinExistence type="inferred from homology"/>
<reference key="1">
    <citation type="submission" date="2008-06" db="EMBL/GenBank/DDBJ databases">
        <title>Genome and proteome analysis of A. pleuropneumoniae serotype 7.</title>
        <authorList>
            <person name="Linke B."/>
            <person name="Buettner F."/>
            <person name="Martinez-Arias R."/>
            <person name="Goesmann A."/>
            <person name="Baltes N."/>
            <person name="Tegetmeyer H."/>
            <person name="Singh M."/>
            <person name="Gerlach G.F."/>
        </authorList>
    </citation>
    <scope>NUCLEOTIDE SEQUENCE [LARGE SCALE GENOMIC DNA]</scope>
    <source>
        <strain>AP76</strain>
    </source>
</reference>
<sequence length="103" mass="11767">MQNQRIRIRLKAFDHRLIDQSTAEIVETAKRTGAQVRGPIPLPTRKERFTVLISPHVNKDARDQYEIRTHKRLVDIVEPTEKTVDALMRLDLAAGVDVQISLG</sequence>